<accession>P9WHR5</accession>
<accession>L0TBV4</accession>
<accession>P65821</accession>
<accession>Q10508</accession>
<sequence>MAAMWRRRPLSSALLSFGLLLGGLPLAAPPLAGATEEPGAGQTPGAPVVAPQQSWNSCREFIADTSEIRTARCATVSVPVDYDQPGGTQAKLAVIRVPATGQRFGALLVNPGGPGASAVDMVAAMAPAIADTDILRHFDLVGFDPRGVGHSTPALRCRTDAEFDAYRRDPMADYSPAGVTHVEQVYRQLAQDCVDRMGFSFLANIGTASVARDMDMVRQALGDDQINYLGYSYGTELGTAYLERFGTHVRAMVLDGAIDPAVSPIEESISQMAGFQTAFNDYAADCARSPACPLGTDSAQWVNRYHALVDPLVQKPGKTSDPRGLSYADATTGTINALYSPQRWKYLTSGLLGLQRGSDAGDLLVLADDYDGRDADGHYSNDQDAFNAVRCVDAPTPADPAAWVAADQRIRQVAPFLSYGQFTGSAPRDLCALWPVPATSTPHPAAPAGAGKVVVVSTTHDPATPYQSGVDLARQLGAPLITFDGTQHTAVFDGNQCVDSAVMHYFLDGTLPPTSLRCAP</sequence>
<name>CAEB_MYCTU</name>
<protein>
    <recommendedName>
        <fullName evidence="2">Carboxylesterase B</fullName>
        <ecNumber evidence="2">3.1.1.-</ecNumber>
    </recommendedName>
</protein>
<evidence type="ECO:0000250" key="1">
    <source>
        <dbReference type="UniProtKB" id="P9WHR3"/>
    </source>
</evidence>
<evidence type="ECO:0000250" key="2">
    <source>
        <dbReference type="UniProtKB" id="P9WHR4"/>
    </source>
</evidence>
<evidence type="ECO:0000255" key="3"/>
<evidence type="ECO:0000305" key="4"/>
<proteinExistence type="evidence at protein level"/>
<reference key="1">
    <citation type="journal article" date="1998" name="Nature">
        <title>Deciphering the biology of Mycobacterium tuberculosis from the complete genome sequence.</title>
        <authorList>
            <person name="Cole S.T."/>
            <person name="Brosch R."/>
            <person name="Parkhill J."/>
            <person name="Garnier T."/>
            <person name="Churcher C.M."/>
            <person name="Harris D.E."/>
            <person name="Gordon S.V."/>
            <person name="Eiglmeier K."/>
            <person name="Gas S."/>
            <person name="Barry C.E. III"/>
            <person name="Tekaia F."/>
            <person name="Badcock K."/>
            <person name="Basham D."/>
            <person name="Brown D."/>
            <person name="Chillingworth T."/>
            <person name="Connor R."/>
            <person name="Davies R.M."/>
            <person name="Devlin K."/>
            <person name="Feltwell T."/>
            <person name="Gentles S."/>
            <person name="Hamlin N."/>
            <person name="Holroyd S."/>
            <person name="Hornsby T."/>
            <person name="Jagels K."/>
            <person name="Krogh A."/>
            <person name="McLean J."/>
            <person name="Moule S."/>
            <person name="Murphy L.D."/>
            <person name="Oliver S."/>
            <person name="Osborne J."/>
            <person name="Quail M.A."/>
            <person name="Rajandream M.A."/>
            <person name="Rogers J."/>
            <person name="Rutter S."/>
            <person name="Seeger K."/>
            <person name="Skelton S."/>
            <person name="Squares S."/>
            <person name="Squares R."/>
            <person name="Sulston J.E."/>
            <person name="Taylor K."/>
            <person name="Whitehead S."/>
            <person name="Barrell B.G."/>
        </authorList>
    </citation>
    <scope>NUCLEOTIDE SEQUENCE [LARGE SCALE GENOMIC DNA]</scope>
    <source>
        <strain>ATCC 25618 / H37Rv</strain>
    </source>
</reference>
<reference key="2">
    <citation type="journal article" date="2011" name="Mol. Cell. Proteomics">
        <title>Proteogenomic analysis of Mycobacterium tuberculosis by high resolution mass spectrometry.</title>
        <authorList>
            <person name="Kelkar D.S."/>
            <person name="Kumar D."/>
            <person name="Kumar P."/>
            <person name="Balakrishnan L."/>
            <person name="Muthusamy B."/>
            <person name="Yadav A.K."/>
            <person name="Shrivastava P."/>
            <person name="Marimuthu A."/>
            <person name="Anand S."/>
            <person name="Sundaram H."/>
            <person name="Kingsbury R."/>
            <person name="Harsha H.C."/>
            <person name="Nair B."/>
            <person name="Prasad T.S."/>
            <person name="Chauhan D.S."/>
            <person name="Katoch K."/>
            <person name="Katoch V.M."/>
            <person name="Kumar P."/>
            <person name="Chaerkady R."/>
            <person name="Ramachandran S."/>
            <person name="Dash D."/>
            <person name="Pandey A."/>
        </authorList>
    </citation>
    <scope>IDENTIFICATION BY MASS SPECTROMETRY [LARGE SCALE ANALYSIS]</scope>
    <source>
        <strain>ATCC 25618 / H37Rv</strain>
    </source>
</reference>
<comment type="subcellular location">
    <subcellularLocation>
        <location evidence="4">Secreted</location>
    </subcellularLocation>
</comment>
<comment type="similarity">
    <text evidence="4">Belongs to the peptidase S33 family.</text>
</comment>
<feature type="signal peptide" evidence="3">
    <location>
        <begin position="1"/>
        <end position="34"/>
    </location>
</feature>
<feature type="chain" id="PRO_0000027327" description="Carboxylesterase B">
    <location>
        <begin position="35"/>
        <end position="520"/>
    </location>
</feature>
<feature type="domain" description="AB hydrolase-1" evidence="3">
    <location>
        <begin position="105"/>
        <end position="403"/>
    </location>
</feature>
<feature type="active site" description="Nucleophile" evidence="1">
    <location>
        <position position="232"/>
    </location>
</feature>
<feature type="active site" evidence="1">
    <location>
        <position position="461"/>
    </location>
</feature>
<feature type="active site" description="Proton donor" evidence="1">
    <location>
        <position position="488"/>
    </location>
</feature>
<dbReference type="EC" id="3.1.1.-" evidence="2"/>
<dbReference type="EMBL" id="AL123456">
    <property type="protein sequence ID" value="CCP45001.1"/>
    <property type="molecule type" value="Genomic_DNA"/>
</dbReference>
<dbReference type="PIR" id="C70776">
    <property type="entry name" value="C70776"/>
</dbReference>
<dbReference type="RefSeq" id="NP_216739.1">
    <property type="nucleotide sequence ID" value="NC_000962.3"/>
</dbReference>
<dbReference type="RefSeq" id="WP_003411484.1">
    <property type="nucleotide sequence ID" value="NZ_NVQJ01000008.1"/>
</dbReference>
<dbReference type="SMR" id="P9WHR5"/>
<dbReference type="STRING" id="83332.Rv2223c"/>
<dbReference type="ESTHER" id="myctu-ym23">
    <property type="family name" value="Tiancimycin-TnmK-Tripeptidase-HIP"/>
</dbReference>
<dbReference type="PaxDb" id="83332-Rv2223c"/>
<dbReference type="DNASU" id="888093"/>
<dbReference type="GeneID" id="888093"/>
<dbReference type="KEGG" id="mtu:Rv2223c"/>
<dbReference type="KEGG" id="mtv:RVBD_2223c"/>
<dbReference type="PATRIC" id="fig|83332.111.peg.2472"/>
<dbReference type="TubercuList" id="Rv2223c"/>
<dbReference type="eggNOG" id="COG0596">
    <property type="taxonomic scope" value="Bacteria"/>
</dbReference>
<dbReference type="InParanoid" id="P9WHR5"/>
<dbReference type="OrthoDB" id="3252468at2"/>
<dbReference type="PhylomeDB" id="P9WHR5"/>
<dbReference type="Proteomes" id="UP000001584">
    <property type="component" value="Chromosome"/>
</dbReference>
<dbReference type="GO" id="GO:0005576">
    <property type="term" value="C:extracellular region"/>
    <property type="evidence" value="ECO:0007669"/>
    <property type="project" value="UniProtKB-SubCell"/>
</dbReference>
<dbReference type="GO" id="GO:0009274">
    <property type="term" value="C:peptidoglycan-based cell wall"/>
    <property type="evidence" value="ECO:0007005"/>
    <property type="project" value="MTBBASE"/>
</dbReference>
<dbReference type="GO" id="GO:0016787">
    <property type="term" value="F:hydrolase activity"/>
    <property type="evidence" value="ECO:0007669"/>
    <property type="project" value="UniProtKB-KW"/>
</dbReference>
<dbReference type="Gene3D" id="3.40.50.1820">
    <property type="entry name" value="alpha/beta hydrolase"/>
    <property type="match status" value="1"/>
</dbReference>
<dbReference type="InterPro" id="IPR000073">
    <property type="entry name" value="AB_hydrolase_1"/>
</dbReference>
<dbReference type="InterPro" id="IPR029058">
    <property type="entry name" value="AB_hydrolase_fold"/>
</dbReference>
<dbReference type="InterPro" id="IPR051601">
    <property type="entry name" value="Serine_prot/Carboxylest_S33"/>
</dbReference>
<dbReference type="PANTHER" id="PTHR43248">
    <property type="entry name" value="2-SUCCINYL-6-HYDROXY-2,4-CYCLOHEXADIENE-1-CARBOXYLATE SYNTHASE"/>
    <property type="match status" value="1"/>
</dbReference>
<dbReference type="PANTHER" id="PTHR43248:SF29">
    <property type="entry name" value="TRIPEPTIDYL AMINOPEPTIDASE"/>
    <property type="match status" value="1"/>
</dbReference>
<dbReference type="Pfam" id="PF00561">
    <property type="entry name" value="Abhydrolase_1"/>
    <property type="match status" value="1"/>
</dbReference>
<dbReference type="SUPFAM" id="SSF53474">
    <property type="entry name" value="alpha/beta-Hydrolases"/>
    <property type="match status" value="1"/>
</dbReference>
<keyword id="KW-0378">Hydrolase</keyword>
<keyword id="KW-1185">Reference proteome</keyword>
<keyword id="KW-0964">Secreted</keyword>
<keyword id="KW-0732">Signal</keyword>
<organism>
    <name type="scientific">Mycobacterium tuberculosis (strain ATCC 25618 / H37Rv)</name>
    <dbReference type="NCBI Taxonomy" id="83332"/>
    <lineage>
        <taxon>Bacteria</taxon>
        <taxon>Bacillati</taxon>
        <taxon>Actinomycetota</taxon>
        <taxon>Actinomycetes</taxon>
        <taxon>Mycobacteriales</taxon>
        <taxon>Mycobacteriaceae</taxon>
        <taxon>Mycobacterium</taxon>
        <taxon>Mycobacterium tuberculosis complex</taxon>
    </lineage>
</organism>
<gene>
    <name type="primary">caeB</name>
    <name type="ordered locus">Rv2223c</name>
    <name type="ORF">MTCY427.04c</name>
</gene>